<protein>
    <recommendedName>
        <fullName evidence="1">Acetyl-coenzyme A carboxylase carboxyl transferase subunit alpha</fullName>
        <shortName evidence="1">ACCase subunit alpha</shortName>
        <shortName evidence="1">Acetyl-CoA carboxylase carboxyltransferase subunit alpha</shortName>
        <ecNumber evidence="1">2.1.3.15</ecNumber>
    </recommendedName>
</protein>
<evidence type="ECO:0000255" key="1">
    <source>
        <dbReference type="HAMAP-Rule" id="MF_00823"/>
    </source>
</evidence>
<evidence type="ECO:0000255" key="2">
    <source>
        <dbReference type="PROSITE-ProRule" id="PRU01137"/>
    </source>
</evidence>
<dbReference type="EC" id="2.1.3.15" evidence="1"/>
<dbReference type="EMBL" id="AE015925">
    <property type="protein sequence ID" value="AAP05127.1"/>
    <property type="molecule type" value="Genomic_DNA"/>
</dbReference>
<dbReference type="RefSeq" id="WP_011006343.1">
    <property type="nucleotide sequence ID" value="NC_003361.3"/>
</dbReference>
<dbReference type="SMR" id="Q823M8"/>
<dbReference type="STRING" id="227941.CCA_00380"/>
<dbReference type="KEGG" id="cca:CCA_00380"/>
<dbReference type="eggNOG" id="COG0825">
    <property type="taxonomic scope" value="Bacteria"/>
</dbReference>
<dbReference type="HOGENOM" id="CLU_015486_0_2_0"/>
<dbReference type="OrthoDB" id="9808023at2"/>
<dbReference type="UniPathway" id="UPA00655">
    <property type="reaction ID" value="UER00711"/>
</dbReference>
<dbReference type="Proteomes" id="UP000002193">
    <property type="component" value="Chromosome"/>
</dbReference>
<dbReference type="GO" id="GO:0009317">
    <property type="term" value="C:acetyl-CoA carboxylase complex"/>
    <property type="evidence" value="ECO:0007669"/>
    <property type="project" value="InterPro"/>
</dbReference>
<dbReference type="GO" id="GO:0003989">
    <property type="term" value="F:acetyl-CoA carboxylase activity"/>
    <property type="evidence" value="ECO:0007669"/>
    <property type="project" value="InterPro"/>
</dbReference>
<dbReference type="GO" id="GO:0005524">
    <property type="term" value="F:ATP binding"/>
    <property type="evidence" value="ECO:0007669"/>
    <property type="project" value="UniProtKB-KW"/>
</dbReference>
<dbReference type="GO" id="GO:0016743">
    <property type="term" value="F:carboxyl- or carbamoyltransferase activity"/>
    <property type="evidence" value="ECO:0007669"/>
    <property type="project" value="UniProtKB-UniRule"/>
</dbReference>
<dbReference type="GO" id="GO:0006633">
    <property type="term" value="P:fatty acid biosynthetic process"/>
    <property type="evidence" value="ECO:0007669"/>
    <property type="project" value="UniProtKB-KW"/>
</dbReference>
<dbReference type="GO" id="GO:2001295">
    <property type="term" value="P:malonyl-CoA biosynthetic process"/>
    <property type="evidence" value="ECO:0007669"/>
    <property type="project" value="UniProtKB-UniRule"/>
</dbReference>
<dbReference type="Gene3D" id="3.90.226.10">
    <property type="entry name" value="2-enoyl-CoA Hydratase, Chain A, domain 1"/>
    <property type="match status" value="1"/>
</dbReference>
<dbReference type="HAMAP" id="MF_00823">
    <property type="entry name" value="AcetylCoA_CT_alpha"/>
    <property type="match status" value="1"/>
</dbReference>
<dbReference type="InterPro" id="IPR001095">
    <property type="entry name" value="Acetyl_CoA_COase_a_su"/>
</dbReference>
<dbReference type="InterPro" id="IPR029045">
    <property type="entry name" value="ClpP/crotonase-like_dom_sf"/>
</dbReference>
<dbReference type="InterPro" id="IPR011763">
    <property type="entry name" value="COA_CT_C"/>
</dbReference>
<dbReference type="NCBIfam" id="TIGR00513">
    <property type="entry name" value="accA"/>
    <property type="match status" value="1"/>
</dbReference>
<dbReference type="NCBIfam" id="NF041504">
    <property type="entry name" value="AccA_sub"/>
    <property type="match status" value="1"/>
</dbReference>
<dbReference type="NCBIfam" id="NF004344">
    <property type="entry name" value="PRK05724.1"/>
    <property type="match status" value="1"/>
</dbReference>
<dbReference type="PANTHER" id="PTHR42853">
    <property type="entry name" value="ACETYL-COENZYME A CARBOXYLASE CARBOXYL TRANSFERASE SUBUNIT ALPHA"/>
    <property type="match status" value="1"/>
</dbReference>
<dbReference type="PANTHER" id="PTHR42853:SF3">
    <property type="entry name" value="ACETYL-COENZYME A CARBOXYLASE CARBOXYL TRANSFERASE SUBUNIT ALPHA, CHLOROPLASTIC"/>
    <property type="match status" value="1"/>
</dbReference>
<dbReference type="Pfam" id="PF03255">
    <property type="entry name" value="ACCA"/>
    <property type="match status" value="1"/>
</dbReference>
<dbReference type="PRINTS" id="PR01069">
    <property type="entry name" value="ACCCTRFRASEA"/>
</dbReference>
<dbReference type="SUPFAM" id="SSF52096">
    <property type="entry name" value="ClpP/crotonase"/>
    <property type="match status" value="1"/>
</dbReference>
<dbReference type="PROSITE" id="PS50989">
    <property type="entry name" value="COA_CT_CTER"/>
    <property type="match status" value="1"/>
</dbReference>
<feature type="chain" id="PRO_0000223756" description="Acetyl-coenzyme A carboxylase carboxyl transferase subunit alpha">
    <location>
        <begin position="1"/>
        <end position="324"/>
    </location>
</feature>
<feature type="domain" description="CoA carboxyltransferase C-terminal" evidence="2">
    <location>
        <begin position="37"/>
        <end position="291"/>
    </location>
</feature>
<reference key="1">
    <citation type="journal article" date="2003" name="Nucleic Acids Res.">
        <title>Genome sequence of Chlamydophila caviae (Chlamydia psittaci GPIC): examining the role of niche-specific genes in the evolution of the Chlamydiaceae.</title>
        <authorList>
            <person name="Read T.D."/>
            <person name="Myers G.S.A."/>
            <person name="Brunham R.C."/>
            <person name="Nelson W.C."/>
            <person name="Paulsen I.T."/>
            <person name="Heidelberg J.F."/>
            <person name="Holtzapple E.K."/>
            <person name="Khouri H.M."/>
            <person name="Federova N.B."/>
            <person name="Carty H.A."/>
            <person name="Umayam L.A."/>
            <person name="Haft D.H."/>
            <person name="Peterson J.D."/>
            <person name="Beanan M.J."/>
            <person name="White O."/>
            <person name="Salzberg S.L."/>
            <person name="Hsia R.-C."/>
            <person name="McClarty G."/>
            <person name="Rank R.G."/>
            <person name="Bavoil P.M."/>
            <person name="Fraser C.M."/>
        </authorList>
    </citation>
    <scope>NUCLEOTIDE SEQUENCE [LARGE SCALE GENOMIC DNA]</scope>
    <source>
        <strain>ATCC VR-813 / DSM 19441 / 03DC25 / GPIC</strain>
    </source>
</reference>
<organism>
    <name type="scientific">Chlamydia caviae (strain ATCC VR-813 / DSM 19441 / 03DC25 / GPIC)</name>
    <name type="common">Chlamydophila caviae</name>
    <dbReference type="NCBI Taxonomy" id="227941"/>
    <lineage>
        <taxon>Bacteria</taxon>
        <taxon>Pseudomonadati</taxon>
        <taxon>Chlamydiota</taxon>
        <taxon>Chlamydiia</taxon>
        <taxon>Chlamydiales</taxon>
        <taxon>Chlamydiaceae</taxon>
        <taxon>Chlamydia/Chlamydophila group</taxon>
        <taxon>Chlamydia</taxon>
    </lineage>
</organism>
<keyword id="KW-0067">ATP-binding</keyword>
<keyword id="KW-0963">Cytoplasm</keyword>
<keyword id="KW-0275">Fatty acid biosynthesis</keyword>
<keyword id="KW-0276">Fatty acid metabolism</keyword>
<keyword id="KW-0444">Lipid biosynthesis</keyword>
<keyword id="KW-0443">Lipid metabolism</keyword>
<keyword id="KW-0547">Nucleotide-binding</keyword>
<keyword id="KW-0808">Transferase</keyword>
<proteinExistence type="inferred from homology"/>
<name>ACCA_CHLCV</name>
<comment type="function">
    <text evidence="1">Component of the acetyl coenzyme A carboxylase (ACC) complex. First, biotin carboxylase catalyzes the carboxylation of biotin on its carrier protein (BCCP) and then the CO(2) group is transferred by the carboxyltransferase to acetyl-CoA to form malonyl-CoA.</text>
</comment>
<comment type="catalytic activity">
    <reaction evidence="1">
        <text>N(6)-carboxybiotinyl-L-lysyl-[protein] + acetyl-CoA = N(6)-biotinyl-L-lysyl-[protein] + malonyl-CoA</text>
        <dbReference type="Rhea" id="RHEA:54728"/>
        <dbReference type="Rhea" id="RHEA-COMP:10505"/>
        <dbReference type="Rhea" id="RHEA-COMP:10506"/>
        <dbReference type="ChEBI" id="CHEBI:57288"/>
        <dbReference type="ChEBI" id="CHEBI:57384"/>
        <dbReference type="ChEBI" id="CHEBI:83144"/>
        <dbReference type="ChEBI" id="CHEBI:83145"/>
        <dbReference type="EC" id="2.1.3.15"/>
    </reaction>
</comment>
<comment type="pathway">
    <text evidence="1">Lipid metabolism; malonyl-CoA biosynthesis; malonyl-CoA from acetyl-CoA: step 1/1.</text>
</comment>
<comment type="subunit">
    <text evidence="1">Acetyl-CoA carboxylase is a heterohexamer composed of biotin carboxyl carrier protein (AccB), biotin carboxylase (AccC) and two subunits each of ACCase subunit alpha (AccA) and ACCase subunit beta (AccD).</text>
</comment>
<comment type="subcellular location">
    <subcellularLocation>
        <location evidence="1">Cytoplasm</location>
    </subcellularLocation>
</comment>
<comment type="similarity">
    <text evidence="1">Belongs to the AccA family.</text>
</comment>
<gene>
    <name evidence="1" type="primary">accA</name>
    <name type="ordered locus">CCA_00380</name>
</gene>
<accession>Q823M8</accession>
<sequence>MELLPHEKQVVEYEKTIAEFKEKNKKNSLLSSSEIQKLERRLDKLKEKIYSDLTPWERVQICRHPSRPRSVNYIEGMCEEFVELCGDRTFRDDPAVVGGLAKIQGQRFMLIGQEKGCDTASRVHRNFGMLCPEGFRKALRLAKMAEKFGLPIVFLVDTPGAFPGLTAEERGQGWAIANNLFQLARLKTPIIVLVIGEGCSGGALGMAIGDVIAMLEHSYYSVISPEGCASILWKDPKKNSEAAAMLKMHGEDLKQFAIVDVVIKEPVGGAHHDPAAVYRNVQNFILQEWLRLKDLSIEDLLEKRYQKFRTIGLYETSSESGPEA</sequence>